<dbReference type="EC" id="4.6.1.-" evidence="4"/>
<dbReference type="EMBL" id="FJ171347">
    <property type="protein sequence ID" value="ACN48843.1"/>
    <property type="molecule type" value="mRNA"/>
</dbReference>
<dbReference type="SMR" id="C0JAR2"/>
<dbReference type="GO" id="GO:0005576">
    <property type="term" value="C:extracellular region"/>
    <property type="evidence" value="ECO:0007669"/>
    <property type="project" value="UniProtKB-SubCell"/>
</dbReference>
<dbReference type="GO" id="GO:0016829">
    <property type="term" value="F:lyase activity"/>
    <property type="evidence" value="ECO:0007669"/>
    <property type="project" value="UniProtKB-KW"/>
</dbReference>
<dbReference type="GO" id="GO:0046872">
    <property type="term" value="F:metal ion binding"/>
    <property type="evidence" value="ECO:0007669"/>
    <property type="project" value="UniProtKB-KW"/>
</dbReference>
<dbReference type="GO" id="GO:0008081">
    <property type="term" value="F:phosphoric diester hydrolase activity"/>
    <property type="evidence" value="ECO:0007669"/>
    <property type="project" value="InterPro"/>
</dbReference>
<dbReference type="GO" id="GO:0090729">
    <property type="term" value="F:toxin activity"/>
    <property type="evidence" value="ECO:0007669"/>
    <property type="project" value="UniProtKB-KW"/>
</dbReference>
<dbReference type="GO" id="GO:0031640">
    <property type="term" value="P:killing of cells of another organism"/>
    <property type="evidence" value="ECO:0007669"/>
    <property type="project" value="UniProtKB-KW"/>
</dbReference>
<dbReference type="GO" id="GO:0016042">
    <property type="term" value="P:lipid catabolic process"/>
    <property type="evidence" value="ECO:0007669"/>
    <property type="project" value="UniProtKB-KW"/>
</dbReference>
<dbReference type="CDD" id="cd08576">
    <property type="entry name" value="GDPD_like_SMaseD_PLD"/>
    <property type="match status" value="1"/>
</dbReference>
<dbReference type="Gene3D" id="3.20.20.190">
    <property type="entry name" value="Phosphatidylinositol (PI) phosphodiesterase"/>
    <property type="match status" value="1"/>
</dbReference>
<dbReference type="InterPro" id="IPR017946">
    <property type="entry name" value="PLC-like_Pdiesterase_TIM-brl"/>
</dbReference>
<dbReference type="Pfam" id="PF13653">
    <property type="entry name" value="GDPD_2"/>
    <property type="match status" value="1"/>
</dbReference>
<dbReference type="SUPFAM" id="SSF51695">
    <property type="entry name" value="PLC-like phosphodiesterases"/>
    <property type="match status" value="1"/>
</dbReference>
<accession>C0JAR2</accession>
<reference key="1">
    <citation type="journal article" date="2009" name="Mol. Biol. Evol.">
        <title>Molecular evolution, functional variation, and proposed nomenclature of the gene family that includes sphingomyelinase D in sicariid spider venoms.</title>
        <authorList>
            <person name="Binford G.J."/>
            <person name="Bodner M.R."/>
            <person name="Cordes M.H."/>
            <person name="Baldwin K.L."/>
            <person name="Rynerson M.R."/>
            <person name="Burns S.N."/>
            <person name="Zobel-Thropp P.A."/>
        </authorList>
    </citation>
    <scope>NUCLEOTIDE SEQUENCE [MRNA]</scope>
    <scope>NOMENCLATURE</scope>
    <source>
        <tissue>Venom gland</tissue>
    </source>
</reference>
<feature type="chain" id="PRO_0000392753" description="Dermonecrotic toxin LhSicTox-alphaIA2av">
    <location>
        <begin position="1" status="less than"/>
        <end position="273"/>
    </location>
</feature>
<feature type="active site" evidence="5">
    <location>
        <position position="5"/>
    </location>
</feature>
<feature type="active site" description="Nucleophile" evidence="5">
    <location>
        <position position="41"/>
    </location>
</feature>
<feature type="binding site" evidence="5">
    <location>
        <position position="25"/>
    </location>
    <ligand>
        <name>Mg(2+)</name>
        <dbReference type="ChEBI" id="CHEBI:18420"/>
    </ligand>
</feature>
<feature type="binding site" evidence="5">
    <location>
        <position position="27"/>
    </location>
    <ligand>
        <name>Mg(2+)</name>
        <dbReference type="ChEBI" id="CHEBI:18420"/>
    </ligand>
</feature>
<feature type="binding site" evidence="5">
    <location>
        <position position="85"/>
    </location>
    <ligand>
        <name>Mg(2+)</name>
        <dbReference type="ChEBI" id="CHEBI:18420"/>
    </ligand>
</feature>
<feature type="disulfide bond" evidence="3">
    <location>
        <begin position="45"/>
        <end position="51"/>
    </location>
</feature>
<feature type="disulfide bond" evidence="3">
    <location>
        <begin position="47"/>
        <end position="190"/>
    </location>
</feature>
<feature type="non-terminal residue">
    <location>
        <position position="1"/>
    </location>
</feature>
<evidence type="ECO:0000250" key="1">
    <source>
        <dbReference type="UniProtKB" id="A0A0D4WTV1"/>
    </source>
</evidence>
<evidence type="ECO:0000250" key="2">
    <source>
        <dbReference type="UniProtKB" id="A0A0D4WV12"/>
    </source>
</evidence>
<evidence type="ECO:0000250" key="3">
    <source>
        <dbReference type="UniProtKB" id="P0CE80"/>
    </source>
</evidence>
<evidence type="ECO:0000250" key="4">
    <source>
        <dbReference type="UniProtKB" id="Q4ZFU2"/>
    </source>
</evidence>
<evidence type="ECO:0000250" key="5">
    <source>
        <dbReference type="UniProtKB" id="Q8I914"/>
    </source>
</evidence>
<evidence type="ECO:0000303" key="6">
    <source>
    </source>
</evidence>
<evidence type="ECO:0000305" key="7"/>
<evidence type="ECO:0000305" key="8">
    <source>
    </source>
</evidence>
<name>A1IA5_LOXHI</name>
<comment type="function">
    <text evidence="1 3">Dermonecrotic toxins cleave the phosphodiester linkage between the phosphate and headgroup of certain phospholipids (sphingolipid and lysolipid substrates), forming an alcohol (often choline) and a cyclic phosphate (By similarity). This toxin acts on sphingomyelin (SM) (By similarity). It may also act on ceramide phosphoethanolamine (CPE), lysophosphatidylcholine (LPC) and lysophosphatidylethanolamine (LPE), but not on lysophosphatidylserine (LPS), and lysophosphatidylglycerol (LPG) (By similarity). It acts by transphosphatidylation, releasing exclusively cyclic phosphate products as second products (By similarity). Induces dermonecrosis, hemolysis, increased vascular permeability, edema, inflammatory response, and platelet aggregation (By similarity).</text>
</comment>
<comment type="catalytic activity">
    <reaction evidence="1">
        <text>an N-(acyl)-sphingosylphosphocholine = an N-(acyl)-sphingosyl-1,3-cyclic phosphate + choline</text>
        <dbReference type="Rhea" id="RHEA:60652"/>
        <dbReference type="ChEBI" id="CHEBI:15354"/>
        <dbReference type="ChEBI" id="CHEBI:64583"/>
        <dbReference type="ChEBI" id="CHEBI:143892"/>
    </reaction>
</comment>
<comment type="catalytic activity">
    <reaction evidence="1">
        <text>an N-(acyl)-sphingosylphosphoethanolamine = an N-(acyl)-sphingosyl-1,3-cyclic phosphate + ethanolamine</text>
        <dbReference type="Rhea" id="RHEA:60648"/>
        <dbReference type="ChEBI" id="CHEBI:57603"/>
        <dbReference type="ChEBI" id="CHEBI:143891"/>
        <dbReference type="ChEBI" id="CHEBI:143892"/>
    </reaction>
</comment>
<comment type="catalytic activity">
    <reaction evidence="1">
        <text>a 1-acyl-sn-glycero-3-phosphocholine = a 1-acyl-sn-glycero-2,3-cyclic phosphate + choline</text>
        <dbReference type="Rhea" id="RHEA:60700"/>
        <dbReference type="ChEBI" id="CHEBI:15354"/>
        <dbReference type="ChEBI" id="CHEBI:58168"/>
        <dbReference type="ChEBI" id="CHEBI:143947"/>
    </reaction>
</comment>
<comment type="catalytic activity">
    <reaction evidence="1">
        <text>a 1-acyl-sn-glycero-3-phosphoethanolamine = a 1-acyl-sn-glycero-2,3-cyclic phosphate + ethanolamine</text>
        <dbReference type="Rhea" id="RHEA:60704"/>
        <dbReference type="ChEBI" id="CHEBI:57603"/>
        <dbReference type="ChEBI" id="CHEBI:64381"/>
        <dbReference type="ChEBI" id="CHEBI:143947"/>
    </reaction>
</comment>
<comment type="cofactor">
    <cofactor evidence="5">
        <name>Mg(2+)</name>
        <dbReference type="ChEBI" id="CHEBI:18420"/>
    </cofactor>
    <text evidence="5">Binds 1 Mg(2+) ion per subunit.</text>
</comment>
<comment type="subcellular location">
    <subcellularLocation>
        <location evidence="8">Secreted</location>
    </subcellularLocation>
</comment>
<comment type="tissue specificity">
    <text evidence="8">Expressed by the venom gland.</text>
</comment>
<comment type="similarity">
    <text evidence="7">Belongs to the arthropod phospholipase D family. Class II subfamily.</text>
</comment>
<comment type="caution">
    <text evidence="1 2 4">The most common activity assay for dermonecrotic toxins detects enzymatic activity by monitoring choline release from substrate. Liberation of choline from sphingomyelin (SM) or lysophosphatidylcholine (LPC) is commonly assumed to result from substrate hydrolysis, giving either ceramide-1-phosphate (C1P) or lysophosphatidic acid (LPA), respectively, as a second product. However, two studies from Lajoie and colleagues (2013 and 2015) report the observation of exclusive formation of cyclic phosphate products as second products, resulting from intramolecular transphosphatidylation. Cyclic phosphates have vastly different biological properties from their monoester counterparts, and they may be relevant to the pathology of brown spider envenomation.</text>
</comment>
<keyword id="KW-0204">Cytolysis</keyword>
<keyword id="KW-1061">Dermonecrotic toxin</keyword>
<keyword id="KW-1015">Disulfide bond</keyword>
<keyword id="KW-0354">Hemolysis</keyword>
<keyword id="KW-0442">Lipid degradation</keyword>
<keyword id="KW-0443">Lipid metabolism</keyword>
<keyword id="KW-0456">Lyase</keyword>
<keyword id="KW-0460">Magnesium</keyword>
<keyword id="KW-0479">Metal-binding</keyword>
<keyword id="KW-0964">Secreted</keyword>
<keyword id="KW-0800">Toxin</keyword>
<keyword id="KW-0865">Zymogen</keyword>
<organism>
    <name type="scientific">Loxosceles hirsuta</name>
    <name type="common">Recluse spider</name>
    <dbReference type="NCBI Taxonomy" id="571525"/>
    <lineage>
        <taxon>Eukaryota</taxon>
        <taxon>Metazoa</taxon>
        <taxon>Ecdysozoa</taxon>
        <taxon>Arthropoda</taxon>
        <taxon>Chelicerata</taxon>
        <taxon>Arachnida</taxon>
        <taxon>Araneae</taxon>
        <taxon>Araneomorphae</taxon>
        <taxon>Haplogynae</taxon>
        <taxon>Scytodoidea</taxon>
        <taxon>Sicariidae</taxon>
        <taxon>Loxosceles</taxon>
    </lineage>
</organism>
<proteinExistence type="evidence at transcript level"/>
<protein>
    <recommendedName>
        <fullName evidence="6">Dermonecrotic toxin LhSicTox-alphaIA2av</fullName>
        <ecNumber evidence="4">4.6.1.-</ecNumber>
    </recommendedName>
    <alternativeName>
        <fullName>Phospholipase D</fullName>
        <shortName>PLD</shortName>
    </alternativeName>
    <alternativeName>
        <fullName>Sphingomyelin phosphodiesterase D</fullName>
        <shortName>SMD</shortName>
        <shortName>SMase D</shortName>
        <shortName>Sphingomyelinase D</shortName>
    </alternativeName>
</protein>
<sequence length="273" mass="30419">WIMGHMVNAIYQIDEFVNLGANSIETDVSFDDNANPEYTYHGIPCDCGRSCLKWENYNDFLKGLRSATTPGSSKYQSKLILVVFDLKTGSLYDNQASEAGKKLAKNLLKHYWNNGNNGGRAYIVLSIPDLNHYPLIKGFTDTLKQEGHPELLEKVGYDFSGNDAVGDVAKAYKKAGVSGHVWQSDGITNCLLRGLTRVKEAVANRDSGNGYINKVYYWTVDKRATTRDALDAGVDGVMTNYPDVIADVMNEAAYKNKVRLATYEDSPWVTFKK</sequence>